<name>PSBO_POPEU</name>
<feature type="chain" id="PRO_0000304519" description="Oxygen-evolving enhancer protein 1, chloroplastic">
    <location>
        <begin position="1" status="less than"/>
        <end position="100" status="greater than"/>
    </location>
</feature>
<feature type="region of interest" description="Disordered" evidence="3">
    <location>
        <begin position="1"/>
        <end position="23"/>
    </location>
</feature>
<feature type="unsure residue" description="S or A" evidence="4">
    <location>
        <position position="18"/>
    </location>
</feature>
<feature type="unsure residue" description="D or E" evidence="4">
    <location>
        <position position="21"/>
    </location>
</feature>
<feature type="unsure residue" description="K or N" evidence="4">
    <location>
        <position position="24"/>
    </location>
</feature>
<feature type="unsure residue" description="I or V" evidence="4">
    <location>
        <position position="80"/>
    </location>
</feature>
<feature type="unsure residue" description="L or V" evidence="4">
    <location>
        <position position="87"/>
    </location>
</feature>
<feature type="non-consecutive residues" evidence="5">
    <location>
        <begin position="10"/>
        <end position="11"/>
    </location>
</feature>
<feature type="non-consecutive residues" evidence="5">
    <location>
        <begin position="30"/>
        <end position="31"/>
    </location>
</feature>
<feature type="non-consecutive residues" evidence="5">
    <location>
        <begin position="47"/>
        <end position="48"/>
    </location>
</feature>
<feature type="non-consecutive residues" evidence="5">
    <location>
        <begin position="55"/>
        <end position="56"/>
    </location>
</feature>
<feature type="non-consecutive residues" evidence="5">
    <location>
        <begin position="72"/>
        <end position="73"/>
    </location>
</feature>
<feature type="non-terminal residue" evidence="5">
    <location>
        <position position="1"/>
    </location>
</feature>
<feature type="non-terminal residue" evidence="5">
    <location>
        <position position="100"/>
    </location>
</feature>
<proteinExistence type="evidence at protein level"/>
<evidence type="ECO:0000250" key="1"/>
<evidence type="ECO:0000250" key="2">
    <source>
        <dbReference type="UniProtKB" id="P23321"/>
    </source>
</evidence>
<evidence type="ECO:0000256" key="3">
    <source>
        <dbReference type="SAM" id="MobiDB-lite"/>
    </source>
</evidence>
<evidence type="ECO:0000269" key="4">
    <source ref="1"/>
</evidence>
<evidence type="ECO:0000303" key="5">
    <source ref="1"/>
</evidence>
<evidence type="ECO:0000305" key="6"/>
<organism>
    <name type="scientific">Populus euphratica</name>
    <name type="common">Euphrates poplar</name>
    <dbReference type="NCBI Taxonomy" id="75702"/>
    <lineage>
        <taxon>Eukaryota</taxon>
        <taxon>Viridiplantae</taxon>
        <taxon>Streptophyta</taxon>
        <taxon>Embryophyta</taxon>
        <taxon>Tracheophyta</taxon>
        <taxon>Spermatophyta</taxon>
        <taxon>Magnoliopsida</taxon>
        <taxon>eudicotyledons</taxon>
        <taxon>Gunneridae</taxon>
        <taxon>Pentapetalae</taxon>
        <taxon>rosids</taxon>
        <taxon>fabids</taxon>
        <taxon>Malpighiales</taxon>
        <taxon>Salicaceae</taxon>
        <taxon>Saliceae</taxon>
        <taxon>Populus</taxon>
    </lineage>
</organism>
<dbReference type="Proteomes" id="UP000694918">
    <property type="component" value="Unplaced"/>
</dbReference>
<dbReference type="GO" id="GO:0009535">
    <property type="term" value="C:chloroplast thylakoid membrane"/>
    <property type="evidence" value="ECO:0007669"/>
    <property type="project" value="UniProtKB-SubCell"/>
</dbReference>
<dbReference type="GO" id="GO:0009654">
    <property type="term" value="C:photosystem II oxygen evolving complex"/>
    <property type="evidence" value="ECO:0007669"/>
    <property type="project" value="InterPro"/>
</dbReference>
<dbReference type="GO" id="GO:0010242">
    <property type="term" value="F:oxygen evolving activity"/>
    <property type="evidence" value="ECO:0007669"/>
    <property type="project" value="InterPro"/>
</dbReference>
<dbReference type="GO" id="GO:0010207">
    <property type="term" value="P:photosystem II assembly"/>
    <property type="evidence" value="ECO:0007669"/>
    <property type="project" value="InterPro"/>
</dbReference>
<dbReference type="GO" id="GO:0042549">
    <property type="term" value="P:photosystem II stabilization"/>
    <property type="evidence" value="ECO:0007669"/>
    <property type="project" value="InterPro"/>
</dbReference>
<dbReference type="Gene3D" id="2.40.160.30">
    <property type="entry name" value="Photosystem II, cytochrome c-550 precursor"/>
    <property type="match status" value="2"/>
</dbReference>
<dbReference type="InterPro" id="IPR011250">
    <property type="entry name" value="OMP/PagP_b-brl"/>
</dbReference>
<dbReference type="InterPro" id="IPR002628">
    <property type="entry name" value="PsbO"/>
</dbReference>
<dbReference type="PANTHER" id="PTHR34058">
    <property type="entry name" value="OXYGEN-EVOLVING ENHANCER PROTEIN 1-2, CHLOROPLASTIC"/>
    <property type="match status" value="1"/>
</dbReference>
<dbReference type="Pfam" id="PF01716">
    <property type="entry name" value="MSP"/>
    <property type="match status" value="2"/>
</dbReference>
<dbReference type="SUPFAM" id="SSF56925">
    <property type="entry name" value="OMPA-like"/>
    <property type="match status" value="1"/>
</dbReference>
<comment type="function">
    <text evidence="2">Stabilizes the manganese cluster which is the primary site of water splitting.</text>
</comment>
<comment type="subcellular location">
    <subcellularLocation>
        <location evidence="1">Plastid</location>
        <location evidence="1">Chloroplast thylakoid membrane</location>
    </subcellularLocation>
    <text evidence="1">Associated with the photosystem II complex.</text>
</comment>
<comment type="similarity">
    <text evidence="6">Belongs to the PsbO family.</text>
</comment>
<protein>
    <recommendedName>
        <fullName>Oxygen-evolving enhancer protein 1, chloroplastic</fullName>
        <shortName>OEE1</shortName>
    </recommendedName>
</protein>
<reference evidence="6" key="1">
    <citation type="thesis" date="2006" institute="ICAT-FCUL" country="Portugal">
        <title>Molecular analysis of Populus euphratica Oliv. response to moderate heat stress.</title>
        <authorList>
            <person name="Ferreira S."/>
        </authorList>
    </citation>
    <scope>PROTEIN SEQUENCE</scope>
    <source>
        <tissue evidence="4">Leaf</tissue>
    </source>
</reference>
<keyword id="KW-0150">Chloroplast</keyword>
<keyword id="KW-0903">Direct protein sequencing</keyword>
<keyword id="KW-0464">Manganese</keyword>
<keyword id="KW-0472">Membrane</keyword>
<keyword id="KW-0602">Photosynthesis</keyword>
<keyword id="KW-0604">Photosystem II</keyword>
<keyword id="KW-0934">Plastid</keyword>
<keyword id="KW-1185">Reference proteome</keyword>
<keyword id="KW-0793">Thylakoid</keyword>
<accession>P84989</accession>
<gene>
    <name type="primary">PSBO</name>
</gene>
<sequence length="100" mass="10671">RLTYDEIQSKAEGINKNSPPDFQKTKLMTRDGIDYAAVTVQLPGGERVPFLFTIKGGSTGYDNAVALPAGGRSKPETGEIIGVFESLQPSDTDLGAKTPK</sequence>